<gene>
    <name type="primary">pgdA</name>
    <name type="ordered locus">HP_0310</name>
    <name type="ordered locus">C694_01565</name>
</gene>
<organism>
    <name type="scientific">Helicobacter pylori (strain ATCC 700392 / 26695)</name>
    <name type="common">Campylobacter pylori</name>
    <dbReference type="NCBI Taxonomy" id="85962"/>
    <lineage>
        <taxon>Bacteria</taxon>
        <taxon>Pseudomonadati</taxon>
        <taxon>Campylobacterota</taxon>
        <taxon>Epsilonproteobacteria</taxon>
        <taxon>Campylobacterales</taxon>
        <taxon>Helicobacteraceae</taxon>
        <taxon>Helicobacter</taxon>
    </lineage>
</organism>
<comment type="function">
    <text evidence="3 4 5 6">Catalyzes the N-deacetylation of peptidoglycan (PG), an important mechanism that appears to confer lysozyme resistance and to mitigate host immune detection; this likely contributes to pathogen persistence in the host. The exact nature of the residue in PG that is deacetylated has not been determined. Is also able to catalyze the deacetylation of acetylated xylan, and, to a lesser extent, that of chitin and chitosan. Therefore, this enzyme might play a role during infection, considering that xylan-containing carbohydrate structures are among those commonly consumed by humans.</text>
</comment>
<comment type="catalytic activity">
    <reaction evidence="6">
        <text>Deacetylation of xylans and xylo-oligosaccharides.</text>
        <dbReference type="EC" id="3.1.1.72"/>
    </reaction>
</comment>
<comment type="biophysicochemical properties">
    <kinetics>
        <KM evidence="6">0.85 mM for chitin</KM>
        <KM evidence="6">0.85 mM for chitosan</KM>
        <KM evidence="6">0.42 mM for acetylated xylan</KM>
        <KM evidence="6">0.18 mM for pNP-acetate</KM>
        <text>kcat is 775 min(-1), 968 min(-1), 2549 min(-1) and 1029 min(-1) with chitin, chitosan, acetylated xylan, and pNP-acetate as substrate, respectively.</text>
    </kinetics>
    <phDependence>
        <text evidence="6">Optimum pH is 6.0 with acetylated xylan as substrate. Is active at acidic pH ranging from 5.0 to 6.0.</text>
    </phDependence>
    <temperatureDependence>
        <text evidence="6">Optimum temperature is 50 degrees Celsius with acetylated xylan as substrate. Retains about 80% of the activity at 30-55 degrees Celsius.</text>
    </temperatureDependence>
</comment>
<comment type="subunit">
    <text evidence="1">Homotetramer.</text>
</comment>
<comment type="induction">
    <text evidence="3 4">Its expression is markedly up-regulated upon cell exposure to oxidative stress. Is also significantly induced (3.5-fold) when H.pylori cells are in contact with macrophages.</text>
</comment>
<comment type="disruption phenotype">
    <text evidence="3 4 5">Cells lacking this gene are considerably less resistant to lysozyme than wild-type, and show an absence or significantly reduced amount of N-deacetylated muropeptides in the bacterial PG. Mutant strains also have attenuated ability to colonize mouse stomachs, and induce a stronger immune response in the host. Disruption of this gene does not affect oxidative stress resistance characteristics, indicating that the major physiological role of the enzyme is not in combating oxidative stress.</text>
</comment>
<comment type="similarity">
    <text evidence="7">Belongs to the polysaccharide deacetylase family.</text>
</comment>
<evidence type="ECO:0000250" key="1"/>
<evidence type="ECO:0000255" key="2">
    <source>
        <dbReference type="PROSITE-ProRule" id="PRU01014"/>
    </source>
</evidence>
<evidence type="ECO:0000269" key="3">
    <source>
    </source>
</evidence>
<evidence type="ECO:0000269" key="4">
    <source>
    </source>
</evidence>
<evidence type="ECO:0000269" key="5">
    <source>
    </source>
</evidence>
<evidence type="ECO:0000269" key="6">
    <source>
    </source>
</evidence>
<evidence type="ECO:0000305" key="7"/>
<reference key="1">
    <citation type="journal article" date="1997" name="Nature">
        <title>The complete genome sequence of the gastric pathogen Helicobacter pylori.</title>
        <authorList>
            <person name="Tomb J.-F."/>
            <person name="White O."/>
            <person name="Kerlavage A.R."/>
            <person name="Clayton R.A."/>
            <person name="Sutton G.G."/>
            <person name="Fleischmann R.D."/>
            <person name="Ketchum K.A."/>
            <person name="Klenk H.-P."/>
            <person name="Gill S.R."/>
            <person name="Dougherty B.A."/>
            <person name="Nelson K.E."/>
            <person name="Quackenbush J."/>
            <person name="Zhou L."/>
            <person name="Kirkness E.F."/>
            <person name="Peterson S.N."/>
            <person name="Loftus B.J."/>
            <person name="Richardson D.L."/>
            <person name="Dodson R.J."/>
            <person name="Khalak H.G."/>
            <person name="Glodek A."/>
            <person name="McKenney K."/>
            <person name="FitzGerald L.M."/>
            <person name="Lee N."/>
            <person name="Adams M.D."/>
            <person name="Hickey E.K."/>
            <person name="Berg D.E."/>
            <person name="Gocayne J.D."/>
            <person name="Utterback T.R."/>
            <person name="Peterson J.D."/>
            <person name="Kelley J.M."/>
            <person name="Cotton M.D."/>
            <person name="Weidman J.F."/>
            <person name="Fujii C."/>
            <person name="Bowman C."/>
            <person name="Watthey L."/>
            <person name="Wallin E."/>
            <person name="Hayes W.S."/>
            <person name="Borodovsky M."/>
            <person name="Karp P.D."/>
            <person name="Smith H.O."/>
            <person name="Fraser C.M."/>
            <person name="Venter J.C."/>
        </authorList>
    </citation>
    <scope>NUCLEOTIDE SEQUENCE [LARGE SCALE GENOMIC DNA]</scope>
    <source>
        <strain>ATCC 700392 / 26695</strain>
    </source>
</reference>
<reference key="2">
    <citation type="submission" date="2012-10" db="EMBL/GenBank/DDBJ databases">
        <title>Draft genome of Helicobacter pylori.</title>
        <authorList>
            <person name="Manolov A."/>
            <person name="Prihodko E."/>
            <person name="Larin A."/>
            <person name="Karpova I."/>
            <person name="Semashko T."/>
            <person name="Alexeev D."/>
            <person name="Kostrjukova E."/>
            <person name="Govorun V."/>
        </authorList>
    </citation>
    <scope>NUCLEOTIDE SEQUENCE [LARGE SCALE GENOMIC DNA]</scope>
    <source>
        <strain>ATCC 700392 / 26695</strain>
    </source>
</reference>
<reference key="3">
    <citation type="journal article" date="2009" name="J. Biol. Chem.">
        <title>Oxidative stress-induced peptidoglycan deacetylase in Helicobacter pylori.</title>
        <authorList>
            <person name="Wang G."/>
            <person name="Olczak A."/>
            <person name="Forsberg L.S."/>
            <person name="Maier R.J."/>
        </authorList>
    </citation>
    <scope>PROTEIN SEQUENCE OF 2-9</scope>
    <scope>FUNCTION AS A PG DEACETYLASE</scope>
    <scope>INDUCTION</scope>
    <scope>DISRUPTION PHENOTYPE</scope>
    <source>
        <strain>ATCC 43504 / NCTC 11637 / JCM 7653 / RPH 13487</strain>
    </source>
</reference>
<reference key="4">
    <citation type="journal article" date="2010" name="Infect. Immun.">
        <title>Peptidoglycan deacetylation in Helicobacter pylori contributes to bacterial survival by mitigating host immune responses.</title>
        <authorList>
            <person name="Wang G."/>
            <person name="Maier S.E."/>
            <person name="Lo L.F."/>
            <person name="Maier G."/>
            <person name="Dosi S."/>
            <person name="Maier R.J."/>
        </authorList>
    </citation>
    <scope>FUNCTION</scope>
    <scope>GENE NAME</scope>
    <scope>INDUCTION</scope>
    <scope>DISRUPTION PHENOTYPE</scope>
    <source>
        <strain>B128</strain>
        <strain>X47</strain>
    </source>
</reference>
<reference key="5">
    <citation type="journal article" date="2012" name="MBio">
        <title>Helicobacter pylori peptidoglycan modifications confer lysozyme resistance and contribute to survival in the host.</title>
        <authorList>
            <person name="Wang G."/>
            <person name="Lo L.F."/>
            <person name="Forsberg L.S."/>
            <person name="Maier R.J."/>
        </authorList>
    </citation>
    <scope>FUNCTION</scope>
    <scope>DISRUPTION PHENOTYPE</scope>
    <source>
        <strain>ATCC 700392 / 26695</strain>
        <strain>X47</strain>
    </source>
</reference>
<reference key="6">
    <citation type="journal article" date="2013" name="PLoS ONE">
        <title>Biochemical characterization of hypothetical proteins from Helicobacter pylori.</title>
        <authorList>
            <person name="Choi H.P."/>
            <person name="Juarez S."/>
            <person name="Ciordia S."/>
            <person name="Fernandez M."/>
            <person name="Bargiela R."/>
            <person name="Albar J.P."/>
            <person name="Mazumdar V."/>
            <person name="Anton B.P."/>
            <person name="Kasif S."/>
            <person name="Ferrer M."/>
            <person name="Steffen M."/>
        </authorList>
    </citation>
    <scope>IDENTIFICATION BY MASS SPECTROMETRY</scope>
    <scope>FUNCTION AS AN ACETYLXYLAN ESTERASE</scope>
    <scope>CATALYTIC ACTIVITY</scope>
    <scope>SUBSTRATE SPECIFICITY</scope>
    <scope>BIOPHYSICOCHEMICAL PROPERTIES</scope>
    <source>
        <strain>ATCC 700392 / 26695</strain>
    </source>
</reference>
<keyword id="KW-0119">Carbohydrate metabolism</keyword>
<keyword id="KW-0961">Cell wall biogenesis/degradation</keyword>
<keyword id="KW-0903">Direct protein sequencing</keyword>
<keyword id="KW-0378">Hydrolase</keyword>
<keyword id="KW-0479">Metal-binding</keyword>
<keyword id="KW-0624">Polysaccharide degradation</keyword>
<keyword id="KW-1185">Reference proteome</keyword>
<keyword id="KW-0346">Stress response</keyword>
<keyword id="KW-0858">Xylan degradation</keyword>
<keyword id="KW-0862">Zinc</keyword>
<feature type="initiator methionine" description="Removed" evidence="3">
    <location>
        <position position="1"/>
    </location>
</feature>
<feature type="chain" id="PRO_0000424438" description="Peptidoglycan deacetylase">
    <location>
        <begin position="2"/>
        <end position="293"/>
    </location>
</feature>
<feature type="domain" description="NodB homology" evidence="2">
    <location>
        <begin position="29"/>
        <end position="276"/>
    </location>
</feature>
<feature type="binding site" evidence="1">
    <location>
        <position position="14"/>
    </location>
    <ligand>
        <name>Zn(2+)</name>
        <dbReference type="ChEBI" id="CHEBI:29105"/>
    </ligand>
</feature>
<feature type="binding site" evidence="1">
    <location>
        <position position="86"/>
    </location>
    <ligand>
        <name>Zn(2+)</name>
        <dbReference type="ChEBI" id="CHEBI:29105"/>
    </ligand>
</feature>
<feature type="binding site" evidence="1">
    <location>
        <position position="90"/>
    </location>
    <ligand>
        <name>Zn(2+)</name>
        <dbReference type="ChEBI" id="CHEBI:29105"/>
    </ligand>
</feature>
<dbReference type="EC" id="3.5.1.-"/>
<dbReference type="EC" id="3.1.1.72"/>
<dbReference type="EMBL" id="AE000511">
    <property type="protein sequence ID" value="AAD07376.1"/>
    <property type="molecule type" value="Genomic_DNA"/>
</dbReference>
<dbReference type="EMBL" id="CP003904">
    <property type="protein sequence ID" value="AFV41534.1"/>
    <property type="molecule type" value="Genomic_DNA"/>
</dbReference>
<dbReference type="PIR" id="F64558">
    <property type="entry name" value="F64558"/>
</dbReference>
<dbReference type="RefSeq" id="NP_207108.1">
    <property type="nucleotide sequence ID" value="NC_000915.1"/>
</dbReference>
<dbReference type="RefSeq" id="WP_001040419.1">
    <property type="nucleotide sequence ID" value="NC_018939.1"/>
</dbReference>
<dbReference type="SMR" id="O25080"/>
<dbReference type="STRING" id="85962.HP_0310"/>
<dbReference type="PaxDb" id="85962-C694_01565"/>
<dbReference type="DNASU" id="899203"/>
<dbReference type="EnsemblBacteria" id="AAD07376">
    <property type="protein sequence ID" value="AAD07376"/>
    <property type="gene ID" value="HP_0310"/>
</dbReference>
<dbReference type="KEGG" id="heo:C694_01565"/>
<dbReference type="KEGG" id="hpy:HP_0310"/>
<dbReference type="PATRIC" id="fig|85962.47.peg.330"/>
<dbReference type="eggNOG" id="COG0726">
    <property type="taxonomic scope" value="Bacteria"/>
</dbReference>
<dbReference type="HOGENOM" id="CLU_029940_1_0_7"/>
<dbReference type="InParanoid" id="O25080"/>
<dbReference type="OrthoDB" id="5352625at2"/>
<dbReference type="PhylomeDB" id="O25080"/>
<dbReference type="BRENDA" id="3.5.1.104">
    <property type="organism ID" value="2604"/>
</dbReference>
<dbReference type="SABIO-RK" id="O25080"/>
<dbReference type="Proteomes" id="UP000000429">
    <property type="component" value="Chromosome"/>
</dbReference>
<dbReference type="GO" id="GO:0046555">
    <property type="term" value="F:acetylxylan esterase activity"/>
    <property type="evidence" value="ECO:0007669"/>
    <property type="project" value="UniProtKB-EC"/>
</dbReference>
<dbReference type="GO" id="GO:0016810">
    <property type="term" value="F:hydrolase activity, acting on carbon-nitrogen (but not peptide) bonds"/>
    <property type="evidence" value="ECO:0007669"/>
    <property type="project" value="InterPro"/>
</dbReference>
<dbReference type="GO" id="GO:0046872">
    <property type="term" value="F:metal ion binding"/>
    <property type="evidence" value="ECO:0007669"/>
    <property type="project" value="UniProtKB-KW"/>
</dbReference>
<dbReference type="GO" id="GO:0071555">
    <property type="term" value="P:cell wall organization"/>
    <property type="evidence" value="ECO:0007669"/>
    <property type="project" value="UniProtKB-KW"/>
</dbReference>
<dbReference type="GO" id="GO:0045493">
    <property type="term" value="P:xylan catabolic process"/>
    <property type="evidence" value="ECO:0007669"/>
    <property type="project" value="UniProtKB-KW"/>
</dbReference>
<dbReference type="CDD" id="cd10938">
    <property type="entry name" value="CE4_HpPgdA_like"/>
    <property type="match status" value="1"/>
</dbReference>
<dbReference type="Gene3D" id="3.20.20.370">
    <property type="entry name" value="Glycoside hydrolase/deacetylase"/>
    <property type="match status" value="1"/>
</dbReference>
<dbReference type="InterPro" id="IPR011330">
    <property type="entry name" value="Glyco_hydro/deAcase_b/a-brl"/>
</dbReference>
<dbReference type="InterPro" id="IPR002509">
    <property type="entry name" value="NODB_dom"/>
</dbReference>
<dbReference type="InterPro" id="IPR037950">
    <property type="entry name" value="PgdA-like"/>
</dbReference>
<dbReference type="PANTHER" id="PTHR47561">
    <property type="entry name" value="POLYSACCHARIDE DEACETYLASE FAMILY PROTEIN (AFU_ORTHOLOGUE AFUA_6G05030)"/>
    <property type="match status" value="1"/>
</dbReference>
<dbReference type="PANTHER" id="PTHR47561:SF1">
    <property type="entry name" value="POLYSACCHARIDE DEACETYLASE FAMILY PROTEIN (AFU_ORTHOLOGUE AFUA_6G05030)"/>
    <property type="match status" value="1"/>
</dbReference>
<dbReference type="Pfam" id="PF01522">
    <property type="entry name" value="Polysacc_deac_1"/>
    <property type="match status" value="1"/>
</dbReference>
<dbReference type="SUPFAM" id="SSF88713">
    <property type="entry name" value="Glycoside hydrolase/deacetylase"/>
    <property type="match status" value="1"/>
</dbReference>
<dbReference type="PROSITE" id="PS51677">
    <property type="entry name" value="NODB"/>
    <property type="match status" value="1"/>
</dbReference>
<proteinExistence type="evidence at protein level"/>
<protein>
    <recommendedName>
        <fullName>Peptidoglycan deacetylase</fullName>
        <shortName>PG deacetylase</shortName>
        <ecNumber>3.5.1.-</ecNumber>
    </recommendedName>
    <alternativeName>
        <fullName>Acetylxylan esterase</fullName>
        <ecNumber>3.1.1.72</ecNumber>
    </alternativeName>
</protein>
<accession>O25080</accession>
<name>PGDAE_HELPY</name>
<sequence length="293" mass="33677">MAKEILVAYGVDIDAVAGWLGSYGGEDSPDDISRGLFAGEVGIPRLLKLFKKYHLPATWFSPGHSIETFSEQMKMIVDAGHEVGAHGYSHENPIAMTAKQEEDVLLKSVELIKDLTGKAPTGYVAPWWEFSNITNELLLKHGFKYDHSLMHNDFTPYYVRVGDSWSKIDYSLEAKDWMKPLIRGVETDLVEIPANWYLDDLPPMMFIKKSPNSFGFVSPHDIGQMWIDQFDWVYREMDYAVFSMTIHPDVSARPQVLLMHEKIIEHINKHEGVRWVTFNEIADDFLKRNPRKK</sequence>